<comment type="function">
    <text evidence="1">NDH-1 shuttles electrons from NADH, via FMN and iron-sulfur (Fe-S) centers, to quinones in the respiratory chain. The immediate electron acceptor for the enzyme in this species is believed to be a menaquinone. Couples the redox reaction to proton translocation (for every two electrons transferred, four hydrogen ions are translocated across the cytoplasmic membrane), and thus conserves the redox energy in a proton gradient.</text>
</comment>
<comment type="catalytic activity">
    <reaction evidence="1">
        <text>a quinone + NADH + 5 H(+)(in) = a quinol + NAD(+) + 4 H(+)(out)</text>
        <dbReference type="Rhea" id="RHEA:57888"/>
        <dbReference type="ChEBI" id="CHEBI:15378"/>
        <dbReference type="ChEBI" id="CHEBI:24646"/>
        <dbReference type="ChEBI" id="CHEBI:57540"/>
        <dbReference type="ChEBI" id="CHEBI:57945"/>
        <dbReference type="ChEBI" id="CHEBI:132124"/>
    </reaction>
</comment>
<comment type="subunit">
    <text evidence="1">NDH-1 is composed of 14 different subunits. Subunits NuoB, C, D, E, F, and G constitute the peripheral sector of the complex.</text>
</comment>
<comment type="subcellular location">
    <subcellularLocation>
        <location evidence="1">Cell membrane</location>
        <topology evidence="1">Peripheral membrane protein</topology>
        <orientation evidence="1">Cytoplasmic side</orientation>
    </subcellularLocation>
</comment>
<comment type="similarity">
    <text evidence="1">Belongs to the complex I 49 kDa subunit family.</text>
</comment>
<gene>
    <name evidence="1" type="primary">nuoD</name>
    <name type="ordered locus">BCG_3171</name>
</gene>
<keyword id="KW-1003">Cell membrane</keyword>
<keyword id="KW-0472">Membrane</keyword>
<keyword id="KW-0520">NAD</keyword>
<keyword id="KW-0874">Quinone</keyword>
<keyword id="KW-1278">Translocase</keyword>
<keyword id="KW-0813">Transport</keyword>
<feature type="chain" id="PRO_0000357854" description="NADH-quinone oxidoreductase subunit D">
    <location>
        <begin position="1"/>
        <end position="440"/>
    </location>
</feature>
<name>NUOD_MYCBP</name>
<protein>
    <recommendedName>
        <fullName evidence="1">NADH-quinone oxidoreductase subunit D</fullName>
        <ecNumber evidence="1">7.1.1.-</ecNumber>
    </recommendedName>
    <alternativeName>
        <fullName evidence="1">NADH dehydrogenase I subunit D</fullName>
    </alternativeName>
    <alternativeName>
        <fullName evidence="1">NDH-1 subunit D</fullName>
    </alternativeName>
</protein>
<accession>A1KNE4</accession>
<evidence type="ECO:0000255" key="1">
    <source>
        <dbReference type="HAMAP-Rule" id="MF_01358"/>
    </source>
</evidence>
<proteinExistence type="inferred from homology"/>
<reference key="1">
    <citation type="journal article" date="2007" name="Proc. Natl. Acad. Sci. U.S.A.">
        <title>Genome plasticity of BCG and impact on vaccine efficacy.</title>
        <authorList>
            <person name="Brosch R."/>
            <person name="Gordon S.V."/>
            <person name="Garnier T."/>
            <person name="Eiglmeier K."/>
            <person name="Frigui W."/>
            <person name="Valenti P."/>
            <person name="Dos Santos S."/>
            <person name="Duthoy S."/>
            <person name="Lacroix C."/>
            <person name="Garcia-Pelayo C."/>
            <person name="Inwald J.K."/>
            <person name="Golby P."/>
            <person name="Garcia J.N."/>
            <person name="Hewinson R.G."/>
            <person name="Behr M.A."/>
            <person name="Quail M.A."/>
            <person name="Churcher C."/>
            <person name="Barrell B.G."/>
            <person name="Parkhill J."/>
            <person name="Cole S.T."/>
        </authorList>
    </citation>
    <scope>NUCLEOTIDE SEQUENCE [LARGE SCALE GENOMIC DNA]</scope>
    <source>
        <strain>BCG / Pasteur 1173P2</strain>
    </source>
</reference>
<organism>
    <name type="scientific">Mycobacterium bovis (strain BCG / Pasteur 1173P2)</name>
    <dbReference type="NCBI Taxonomy" id="410289"/>
    <lineage>
        <taxon>Bacteria</taxon>
        <taxon>Bacillati</taxon>
        <taxon>Actinomycetota</taxon>
        <taxon>Actinomycetes</taxon>
        <taxon>Mycobacteriales</taxon>
        <taxon>Mycobacteriaceae</taxon>
        <taxon>Mycobacterium</taxon>
        <taxon>Mycobacterium tuberculosis complex</taxon>
    </lineage>
</organism>
<dbReference type="EC" id="7.1.1.-" evidence="1"/>
<dbReference type="EMBL" id="AM408590">
    <property type="protein sequence ID" value="CAL73160.1"/>
    <property type="molecule type" value="Genomic_DNA"/>
</dbReference>
<dbReference type="RefSeq" id="WP_003416430.1">
    <property type="nucleotide sequence ID" value="NC_008769.1"/>
</dbReference>
<dbReference type="SMR" id="A1KNE4"/>
<dbReference type="GeneID" id="45427135"/>
<dbReference type="KEGG" id="mbb:BCG_3171"/>
<dbReference type="HOGENOM" id="CLU_015134_1_2_11"/>
<dbReference type="Proteomes" id="UP000001472">
    <property type="component" value="Chromosome"/>
</dbReference>
<dbReference type="GO" id="GO:0005886">
    <property type="term" value="C:plasma membrane"/>
    <property type="evidence" value="ECO:0007669"/>
    <property type="project" value="UniProtKB-SubCell"/>
</dbReference>
<dbReference type="GO" id="GO:0051287">
    <property type="term" value="F:NAD binding"/>
    <property type="evidence" value="ECO:0007669"/>
    <property type="project" value="InterPro"/>
</dbReference>
<dbReference type="GO" id="GO:0050136">
    <property type="term" value="F:NADH:ubiquinone reductase (non-electrogenic) activity"/>
    <property type="evidence" value="ECO:0007669"/>
    <property type="project" value="UniProtKB-UniRule"/>
</dbReference>
<dbReference type="GO" id="GO:0048038">
    <property type="term" value="F:quinone binding"/>
    <property type="evidence" value="ECO:0007669"/>
    <property type="project" value="UniProtKB-KW"/>
</dbReference>
<dbReference type="FunFam" id="1.10.645.10:FF:000005">
    <property type="entry name" value="NADH-quinone oxidoreductase subunit D"/>
    <property type="match status" value="1"/>
</dbReference>
<dbReference type="Gene3D" id="1.10.645.10">
    <property type="entry name" value="Cytochrome-c3 Hydrogenase, chain B"/>
    <property type="match status" value="1"/>
</dbReference>
<dbReference type="HAMAP" id="MF_01358">
    <property type="entry name" value="NDH1_NuoD"/>
    <property type="match status" value="1"/>
</dbReference>
<dbReference type="InterPro" id="IPR001135">
    <property type="entry name" value="NADH_Q_OxRdtase_suD"/>
</dbReference>
<dbReference type="InterPro" id="IPR014029">
    <property type="entry name" value="NADH_UbQ_OxRdtase_49kDa_CS"/>
</dbReference>
<dbReference type="InterPro" id="IPR022885">
    <property type="entry name" value="NDH1_su_D/H"/>
</dbReference>
<dbReference type="InterPro" id="IPR029014">
    <property type="entry name" value="NiFe-Hase_large"/>
</dbReference>
<dbReference type="NCBIfam" id="TIGR01962">
    <property type="entry name" value="NuoD"/>
    <property type="match status" value="1"/>
</dbReference>
<dbReference type="NCBIfam" id="NF004739">
    <property type="entry name" value="PRK06075.1"/>
    <property type="match status" value="1"/>
</dbReference>
<dbReference type="PANTHER" id="PTHR11993:SF10">
    <property type="entry name" value="NADH DEHYDROGENASE [UBIQUINONE] IRON-SULFUR PROTEIN 2, MITOCHONDRIAL"/>
    <property type="match status" value="1"/>
</dbReference>
<dbReference type="PANTHER" id="PTHR11993">
    <property type="entry name" value="NADH-UBIQUINONE OXIDOREDUCTASE 49 KDA SUBUNIT"/>
    <property type="match status" value="1"/>
</dbReference>
<dbReference type="Pfam" id="PF00346">
    <property type="entry name" value="Complex1_49kDa"/>
    <property type="match status" value="1"/>
</dbReference>
<dbReference type="SUPFAM" id="SSF56762">
    <property type="entry name" value="HydB/Nqo4-like"/>
    <property type="match status" value="1"/>
</dbReference>
<dbReference type="PROSITE" id="PS00535">
    <property type="entry name" value="COMPLEX1_49K"/>
    <property type="match status" value="1"/>
</dbReference>
<sequence length="440" mass="48164">MTAIADSAGGAGETVLVAGGQDWQQVVDAARSADPGERIVVNMGPQHPSTHGVLRLILEIEGETVVEARCGIGYLHTGIEKNLEYRYWTQGVTFVTRMDYLSPFFNETAYCLGVEKLLGITDEIPERVNVIRVLMMELNRISSHLVALATGGMELGAMTPMFVGFRAREIVLTLFEKITGLRMNSAYIRPGGVAQDLPPNAATEIAEALKQLRQPLREMGELLNENAIWKARTQGVGYLDLTGCMALGITGPILRSTGLPHDLRKSEPYCGYQHYEFDVITDDSCDAYGRYMIRVKEMWESMKIVEQCLDKLRPGPTMISDRKLAWPADLQVGPDGLGNSPKHIAKIMGSSMEALIHHFKLVTEGIRVPAGQVYVAVESPRGELGVHMVSDGGTRPYRVHYRDPSFTNLQSVAAMCEGGMVADLIAAVASIDPVMGGVDR</sequence>